<gene>
    <name evidence="1" type="primary">nadX1</name>
    <name type="ordered locus">BPP0257</name>
</gene>
<name>ASPD1_BORPA</name>
<reference key="1">
    <citation type="journal article" date="2003" name="Nat. Genet.">
        <title>Comparative analysis of the genome sequences of Bordetella pertussis, Bordetella parapertussis and Bordetella bronchiseptica.</title>
        <authorList>
            <person name="Parkhill J."/>
            <person name="Sebaihia M."/>
            <person name="Preston A."/>
            <person name="Murphy L.D."/>
            <person name="Thomson N.R."/>
            <person name="Harris D.E."/>
            <person name="Holden M.T.G."/>
            <person name="Churcher C.M."/>
            <person name="Bentley S.D."/>
            <person name="Mungall K.L."/>
            <person name="Cerdeno-Tarraga A.-M."/>
            <person name="Temple L."/>
            <person name="James K.D."/>
            <person name="Harris B."/>
            <person name="Quail M.A."/>
            <person name="Achtman M."/>
            <person name="Atkin R."/>
            <person name="Baker S."/>
            <person name="Basham D."/>
            <person name="Bason N."/>
            <person name="Cherevach I."/>
            <person name="Chillingworth T."/>
            <person name="Collins M."/>
            <person name="Cronin A."/>
            <person name="Davis P."/>
            <person name="Doggett J."/>
            <person name="Feltwell T."/>
            <person name="Goble A."/>
            <person name="Hamlin N."/>
            <person name="Hauser H."/>
            <person name="Holroyd S."/>
            <person name="Jagels K."/>
            <person name="Leather S."/>
            <person name="Moule S."/>
            <person name="Norberczak H."/>
            <person name="O'Neil S."/>
            <person name="Ormond D."/>
            <person name="Price C."/>
            <person name="Rabbinowitsch E."/>
            <person name="Rutter S."/>
            <person name="Sanders M."/>
            <person name="Saunders D."/>
            <person name="Seeger K."/>
            <person name="Sharp S."/>
            <person name="Simmonds M."/>
            <person name="Skelton J."/>
            <person name="Squares R."/>
            <person name="Squares S."/>
            <person name="Stevens K."/>
            <person name="Unwin L."/>
            <person name="Whitehead S."/>
            <person name="Barrell B.G."/>
            <person name="Maskell D.J."/>
        </authorList>
    </citation>
    <scope>NUCLEOTIDE SEQUENCE [LARGE SCALE GENOMIC DNA]</scope>
    <source>
        <strain>12822 / ATCC BAA-587 / NCTC 13253</strain>
    </source>
</reference>
<comment type="function">
    <text evidence="1">Specifically catalyzes the NAD or NADP-dependent dehydrogenation of L-aspartate to iminoaspartate.</text>
</comment>
<comment type="catalytic activity">
    <reaction evidence="1">
        <text>L-aspartate + NADP(+) + H2O = oxaloacetate + NH4(+) + NADPH + H(+)</text>
        <dbReference type="Rhea" id="RHEA:11784"/>
        <dbReference type="ChEBI" id="CHEBI:15377"/>
        <dbReference type="ChEBI" id="CHEBI:15378"/>
        <dbReference type="ChEBI" id="CHEBI:16452"/>
        <dbReference type="ChEBI" id="CHEBI:28938"/>
        <dbReference type="ChEBI" id="CHEBI:29991"/>
        <dbReference type="ChEBI" id="CHEBI:57783"/>
        <dbReference type="ChEBI" id="CHEBI:58349"/>
        <dbReference type="EC" id="1.4.1.21"/>
    </reaction>
</comment>
<comment type="catalytic activity">
    <reaction evidence="1">
        <text>L-aspartate + NAD(+) + H2O = oxaloacetate + NH4(+) + NADH + H(+)</text>
        <dbReference type="Rhea" id="RHEA:11788"/>
        <dbReference type="ChEBI" id="CHEBI:15377"/>
        <dbReference type="ChEBI" id="CHEBI:15378"/>
        <dbReference type="ChEBI" id="CHEBI:16452"/>
        <dbReference type="ChEBI" id="CHEBI:28938"/>
        <dbReference type="ChEBI" id="CHEBI:29991"/>
        <dbReference type="ChEBI" id="CHEBI:57540"/>
        <dbReference type="ChEBI" id="CHEBI:57945"/>
        <dbReference type="EC" id="1.4.1.21"/>
    </reaction>
</comment>
<comment type="pathway">
    <text evidence="1">Cofactor biosynthesis; NAD(+) biosynthesis; iminoaspartate from L-aspartate (dehydrogenase route): step 1/1.</text>
</comment>
<comment type="miscellaneous">
    <text evidence="1">The iminoaspartate product is unstable in aqueous solution and can decompose to oxaloacetate and ammonia.</text>
</comment>
<comment type="similarity">
    <text evidence="1">Belongs to the L-aspartate dehydrogenase family.</text>
</comment>
<comment type="sequence caution" evidence="2">
    <conflict type="erroneous initiation">
        <sequence resource="EMBL-CDS" id="CAE39998"/>
    </conflict>
</comment>
<protein>
    <recommendedName>
        <fullName evidence="1">L-aspartate dehydrogenase 1</fullName>
        <ecNumber evidence="1">1.4.1.21</ecNumber>
    </recommendedName>
</protein>
<sequence>MNTPLRVGIVGCGVLANAMAGHLARQPRPVEIVGCLVRDPGRARGALPCHGSWEALLAQRPEVVVECAGQAALAQYAQAILAAGVDLVPASVGALADDALRGALLEAAAAAGARIRIPSGAMVGIDGLAAARHVGVAEVLYRGTMPPVALQRYVSGPLPERGLAFAGSAREAVARFPKNANLTGTIALAGIGFDRTRVEMLIDPDATANVHELLARGEFGDFHARVSGLRISESSPSSRIVAGSLAQAALGSGFLALS</sequence>
<feature type="chain" id="PRO_0000144883" description="L-aspartate dehydrogenase 1">
    <location>
        <begin position="1"/>
        <end position="258"/>
    </location>
</feature>
<feature type="active site" evidence="1">
    <location>
        <position position="211"/>
    </location>
</feature>
<feature type="binding site" evidence="1">
    <location>
        <position position="121"/>
    </location>
    <ligand>
        <name>NAD(+)</name>
        <dbReference type="ChEBI" id="CHEBI:57540"/>
    </ligand>
</feature>
<feature type="binding site" evidence="1">
    <location>
        <position position="181"/>
    </location>
    <ligand>
        <name>NAD(+)</name>
        <dbReference type="ChEBI" id="CHEBI:57540"/>
    </ligand>
</feature>
<dbReference type="EC" id="1.4.1.21" evidence="1"/>
<dbReference type="EMBL" id="BX640423">
    <property type="protein sequence ID" value="CAE39998.1"/>
    <property type="status" value="ALT_INIT"/>
    <property type="molecule type" value="Genomic_DNA"/>
</dbReference>
<dbReference type="RefSeq" id="WP_003818490.1">
    <property type="nucleotide sequence ID" value="NC_002928.3"/>
</dbReference>
<dbReference type="SMR" id="Q7W1T9"/>
<dbReference type="KEGG" id="bpa:BPP0257"/>
<dbReference type="HOGENOM" id="CLU_089550_0_0_4"/>
<dbReference type="UniPathway" id="UPA00253">
    <property type="reaction ID" value="UER00456"/>
</dbReference>
<dbReference type="Proteomes" id="UP000001421">
    <property type="component" value="Chromosome"/>
</dbReference>
<dbReference type="GO" id="GO:0033735">
    <property type="term" value="F:aspartate dehydrogenase activity"/>
    <property type="evidence" value="ECO:0007669"/>
    <property type="project" value="UniProtKB-EC"/>
</dbReference>
<dbReference type="GO" id="GO:0051287">
    <property type="term" value="F:NAD binding"/>
    <property type="evidence" value="ECO:0007669"/>
    <property type="project" value="UniProtKB-UniRule"/>
</dbReference>
<dbReference type="GO" id="GO:0050661">
    <property type="term" value="F:NADP binding"/>
    <property type="evidence" value="ECO:0007669"/>
    <property type="project" value="UniProtKB-UniRule"/>
</dbReference>
<dbReference type="GO" id="GO:0016639">
    <property type="term" value="F:oxidoreductase activity, acting on the CH-NH2 group of donors, NAD or NADP as acceptor"/>
    <property type="evidence" value="ECO:0007669"/>
    <property type="project" value="UniProtKB-UniRule"/>
</dbReference>
<dbReference type="GO" id="GO:0009435">
    <property type="term" value="P:NAD biosynthetic process"/>
    <property type="evidence" value="ECO:0007669"/>
    <property type="project" value="UniProtKB-UniRule"/>
</dbReference>
<dbReference type="Gene3D" id="3.30.360.10">
    <property type="entry name" value="Dihydrodipicolinate Reductase, domain 2"/>
    <property type="match status" value="1"/>
</dbReference>
<dbReference type="Gene3D" id="3.40.50.720">
    <property type="entry name" value="NAD(P)-binding Rossmann-like Domain"/>
    <property type="match status" value="1"/>
</dbReference>
<dbReference type="HAMAP" id="MF_01265">
    <property type="entry name" value="NadX"/>
    <property type="match status" value="1"/>
</dbReference>
<dbReference type="InterPro" id="IPR005106">
    <property type="entry name" value="Asp/hSer_DH_NAD-bd"/>
</dbReference>
<dbReference type="InterPro" id="IPR002811">
    <property type="entry name" value="Asp_DH"/>
</dbReference>
<dbReference type="InterPro" id="IPR020626">
    <property type="entry name" value="Asp_DH_prok"/>
</dbReference>
<dbReference type="InterPro" id="IPR011182">
    <property type="entry name" value="L-Asp_DH"/>
</dbReference>
<dbReference type="InterPro" id="IPR036291">
    <property type="entry name" value="NAD(P)-bd_dom_sf"/>
</dbReference>
<dbReference type="NCBIfam" id="NF009828">
    <property type="entry name" value="PRK13303.1-3"/>
    <property type="match status" value="1"/>
</dbReference>
<dbReference type="NCBIfam" id="NF009829">
    <property type="entry name" value="PRK13303.1-4"/>
    <property type="match status" value="1"/>
</dbReference>
<dbReference type="PANTHER" id="PTHR31873:SF6">
    <property type="entry name" value="ASPARTATE DEHYDROGENASE DOMAIN-CONTAINING PROTEIN"/>
    <property type="match status" value="1"/>
</dbReference>
<dbReference type="PANTHER" id="PTHR31873">
    <property type="entry name" value="L-ASPARTATE DEHYDROGENASE-RELATED"/>
    <property type="match status" value="1"/>
</dbReference>
<dbReference type="Pfam" id="PF01958">
    <property type="entry name" value="Asp_DH_C"/>
    <property type="match status" value="1"/>
</dbReference>
<dbReference type="Pfam" id="PF03447">
    <property type="entry name" value="NAD_binding_3"/>
    <property type="match status" value="1"/>
</dbReference>
<dbReference type="PIRSF" id="PIRSF005227">
    <property type="entry name" value="Asp_dh_NAD_syn"/>
    <property type="match status" value="1"/>
</dbReference>
<dbReference type="SUPFAM" id="SSF55347">
    <property type="entry name" value="Glyceraldehyde-3-phosphate dehydrogenase-like, C-terminal domain"/>
    <property type="match status" value="1"/>
</dbReference>
<dbReference type="SUPFAM" id="SSF51735">
    <property type="entry name" value="NAD(P)-binding Rossmann-fold domains"/>
    <property type="match status" value="1"/>
</dbReference>
<evidence type="ECO:0000255" key="1">
    <source>
        <dbReference type="HAMAP-Rule" id="MF_01265"/>
    </source>
</evidence>
<evidence type="ECO:0000305" key="2"/>
<organism>
    <name type="scientific">Bordetella parapertussis (strain 12822 / ATCC BAA-587 / NCTC 13253)</name>
    <dbReference type="NCBI Taxonomy" id="257311"/>
    <lineage>
        <taxon>Bacteria</taxon>
        <taxon>Pseudomonadati</taxon>
        <taxon>Pseudomonadota</taxon>
        <taxon>Betaproteobacteria</taxon>
        <taxon>Burkholderiales</taxon>
        <taxon>Alcaligenaceae</taxon>
        <taxon>Bordetella</taxon>
    </lineage>
</organism>
<proteinExistence type="inferred from homology"/>
<keyword id="KW-0520">NAD</keyword>
<keyword id="KW-0521">NADP</keyword>
<keyword id="KW-0560">Oxidoreductase</keyword>
<keyword id="KW-0662">Pyridine nucleotide biosynthesis</keyword>
<accession>Q7W1T9</accession>